<protein>
    <recommendedName>
        <fullName evidence="1">3-dehydroquinate dehydratase</fullName>
        <shortName evidence="1">3-dehydroquinase</shortName>
        <ecNumber evidence="1">4.2.1.10</ecNumber>
    </recommendedName>
    <alternativeName>
        <fullName evidence="1">Type II DHQase</fullName>
    </alternativeName>
</protein>
<dbReference type="EC" id="4.2.1.10" evidence="1"/>
<dbReference type="EMBL" id="CP000463">
    <property type="protein sequence ID" value="ABJ06923.1"/>
    <property type="molecule type" value="Genomic_DNA"/>
</dbReference>
<dbReference type="SMR" id="Q07MB1"/>
<dbReference type="STRING" id="316055.RPE_2986"/>
<dbReference type="KEGG" id="rpe:RPE_2986"/>
<dbReference type="eggNOG" id="COG0757">
    <property type="taxonomic scope" value="Bacteria"/>
</dbReference>
<dbReference type="HOGENOM" id="CLU_090968_2_0_5"/>
<dbReference type="OrthoDB" id="9790793at2"/>
<dbReference type="UniPathway" id="UPA00053">
    <property type="reaction ID" value="UER00086"/>
</dbReference>
<dbReference type="GO" id="GO:0003855">
    <property type="term" value="F:3-dehydroquinate dehydratase activity"/>
    <property type="evidence" value="ECO:0007669"/>
    <property type="project" value="UniProtKB-UniRule"/>
</dbReference>
<dbReference type="GO" id="GO:0008652">
    <property type="term" value="P:amino acid biosynthetic process"/>
    <property type="evidence" value="ECO:0007669"/>
    <property type="project" value="UniProtKB-KW"/>
</dbReference>
<dbReference type="GO" id="GO:0009073">
    <property type="term" value="P:aromatic amino acid family biosynthetic process"/>
    <property type="evidence" value="ECO:0007669"/>
    <property type="project" value="UniProtKB-KW"/>
</dbReference>
<dbReference type="GO" id="GO:0009423">
    <property type="term" value="P:chorismate biosynthetic process"/>
    <property type="evidence" value="ECO:0007669"/>
    <property type="project" value="UniProtKB-UniRule"/>
</dbReference>
<dbReference type="GO" id="GO:0019631">
    <property type="term" value="P:quinate catabolic process"/>
    <property type="evidence" value="ECO:0007669"/>
    <property type="project" value="TreeGrafter"/>
</dbReference>
<dbReference type="CDD" id="cd00466">
    <property type="entry name" value="DHQase_II"/>
    <property type="match status" value="1"/>
</dbReference>
<dbReference type="Gene3D" id="3.40.50.9100">
    <property type="entry name" value="Dehydroquinase, class II"/>
    <property type="match status" value="1"/>
</dbReference>
<dbReference type="HAMAP" id="MF_00169">
    <property type="entry name" value="AroQ"/>
    <property type="match status" value="1"/>
</dbReference>
<dbReference type="InterPro" id="IPR001874">
    <property type="entry name" value="DHquinase_II"/>
</dbReference>
<dbReference type="InterPro" id="IPR018509">
    <property type="entry name" value="DHquinase_II_CS"/>
</dbReference>
<dbReference type="InterPro" id="IPR036441">
    <property type="entry name" value="DHquinase_II_sf"/>
</dbReference>
<dbReference type="NCBIfam" id="TIGR01088">
    <property type="entry name" value="aroQ"/>
    <property type="match status" value="1"/>
</dbReference>
<dbReference type="NCBIfam" id="NF003805">
    <property type="entry name" value="PRK05395.1-2"/>
    <property type="match status" value="1"/>
</dbReference>
<dbReference type="NCBIfam" id="NF003806">
    <property type="entry name" value="PRK05395.1-3"/>
    <property type="match status" value="1"/>
</dbReference>
<dbReference type="NCBIfam" id="NF003807">
    <property type="entry name" value="PRK05395.1-4"/>
    <property type="match status" value="1"/>
</dbReference>
<dbReference type="PANTHER" id="PTHR21272">
    <property type="entry name" value="CATABOLIC 3-DEHYDROQUINASE"/>
    <property type="match status" value="1"/>
</dbReference>
<dbReference type="PANTHER" id="PTHR21272:SF3">
    <property type="entry name" value="CATABOLIC 3-DEHYDROQUINASE"/>
    <property type="match status" value="1"/>
</dbReference>
<dbReference type="Pfam" id="PF01220">
    <property type="entry name" value="DHquinase_II"/>
    <property type="match status" value="1"/>
</dbReference>
<dbReference type="PIRSF" id="PIRSF001399">
    <property type="entry name" value="DHquinase_II"/>
    <property type="match status" value="1"/>
</dbReference>
<dbReference type="SUPFAM" id="SSF52304">
    <property type="entry name" value="Type II 3-dehydroquinate dehydratase"/>
    <property type="match status" value="1"/>
</dbReference>
<dbReference type="PROSITE" id="PS01029">
    <property type="entry name" value="DEHYDROQUINASE_II"/>
    <property type="match status" value="1"/>
</dbReference>
<reference key="1">
    <citation type="submission" date="2006-09" db="EMBL/GenBank/DDBJ databases">
        <title>Complete sequence of Rhodopseudomonas palustris BisA53.</title>
        <authorList>
            <consortium name="US DOE Joint Genome Institute"/>
            <person name="Copeland A."/>
            <person name="Lucas S."/>
            <person name="Lapidus A."/>
            <person name="Barry K."/>
            <person name="Detter J.C."/>
            <person name="Glavina del Rio T."/>
            <person name="Hammon N."/>
            <person name="Israni S."/>
            <person name="Dalin E."/>
            <person name="Tice H."/>
            <person name="Pitluck S."/>
            <person name="Chain P."/>
            <person name="Malfatti S."/>
            <person name="Shin M."/>
            <person name="Vergez L."/>
            <person name="Schmutz J."/>
            <person name="Larimer F."/>
            <person name="Land M."/>
            <person name="Hauser L."/>
            <person name="Pelletier D.A."/>
            <person name="Kyrpides N."/>
            <person name="Kim E."/>
            <person name="Harwood C.S."/>
            <person name="Oda Y."/>
            <person name="Richardson P."/>
        </authorList>
    </citation>
    <scope>NUCLEOTIDE SEQUENCE [LARGE SCALE GENOMIC DNA]</scope>
    <source>
        <strain>BisA53</strain>
    </source>
</reference>
<feature type="chain" id="PRO_1000023504" description="3-dehydroquinate dehydratase">
    <location>
        <begin position="1"/>
        <end position="151"/>
    </location>
</feature>
<feature type="active site" description="Proton acceptor" evidence="1">
    <location>
        <position position="24"/>
    </location>
</feature>
<feature type="active site" description="Proton donor" evidence="1">
    <location>
        <position position="102"/>
    </location>
</feature>
<feature type="binding site" evidence="1">
    <location>
        <position position="76"/>
    </location>
    <ligand>
        <name>substrate</name>
    </ligand>
</feature>
<feature type="binding site" evidence="1">
    <location>
        <position position="82"/>
    </location>
    <ligand>
        <name>substrate</name>
    </ligand>
</feature>
<feature type="binding site" evidence="1">
    <location>
        <position position="89"/>
    </location>
    <ligand>
        <name>substrate</name>
    </ligand>
</feature>
<feature type="binding site" evidence="1">
    <location>
        <begin position="103"/>
        <end position="104"/>
    </location>
    <ligand>
        <name>substrate</name>
    </ligand>
</feature>
<feature type="binding site" evidence="1">
    <location>
        <position position="113"/>
    </location>
    <ligand>
        <name>substrate</name>
    </ligand>
</feature>
<feature type="site" description="Transition state stabilizer" evidence="1">
    <location>
        <position position="19"/>
    </location>
</feature>
<evidence type="ECO:0000255" key="1">
    <source>
        <dbReference type="HAMAP-Rule" id="MF_00169"/>
    </source>
</evidence>
<accession>Q07MB1</accession>
<sequence length="151" mass="15895">MPKTIYVLNGPNLNLLGTREPDVYGHATLADVERLCAETASGYGLAVDCRQSNHEGDLIDFIHDARATGAIGIVINPGGYTHTSIALHDALAAVQIPAVEVHVSNIHARESFRQHSFTAKAAFASLCGFGIDGYRLAISGLAAKLGITAKA</sequence>
<organism>
    <name type="scientific">Rhodopseudomonas palustris (strain BisA53)</name>
    <dbReference type="NCBI Taxonomy" id="316055"/>
    <lineage>
        <taxon>Bacteria</taxon>
        <taxon>Pseudomonadati</taxon>
        <taxon>Pseudomonadota</taxon>
        <taxon>Alphaproteobacteria</taxon>
        <taxon>Hyphomicrobiales</taxon>
        <taxon>Nitrobacteraceae</taxon>
        <taxon>Rhodopseudomonas</taxon>
    </lineage>
</organism>
<keyword id="KW-0028">Amino-acid biosynthesis</keyword>
<keyword id="KW-0057">Aromatic amino acid biosynthesis</keyword>
<keyword id="KW-0456">Lyase</keyword>
<proteinExistence type="inferred from homology"/>
<gene>
    <name evidence="1" type="primary">aroQ</name>
    <name type="ordered locus">RPE_2986</name>
</gene>
<comment type="function">
    <text evidence="1">Catalyzes a trans-dehydration via an enolate intermediate.</text>
</comment>
<comment type="catalytic activity">
    <reaction evidence="1">
        <text>3-dehydroquinate = 3-dehydroshikimate + H2O</text>
        <dbReference type="Rhea" id="RHEA:21096"/>
        <dbReference type="ChEBI" id="CHEBI:15377"/>
        <dbReference type="ChEBI" id="CHEBI:16630"/>
        <dbReference type="ChEBI" id="CHEBI:32364"/>
        <dbReference type="EC" id="4.2.1.10"/>
    </reaction>
</comment>
<comment type="pathway">
    <text evidence="1">Metabolic intermediate biosynthesis; chorismate biosynthesis; chorismate from D-erythrose 4-phosphate and phosphoenolpyruvate: step 3/7.</text>
</comment>
<comment type="subunit">
    <text evidence="1">Homododecamer.</text>
</comment>
<comment type="similarity">
    <text evidence="1">Belongs to the type-II 3-dehydroquinase family.</text>
</comment>
<name>AROQ_RHOP5</name>